<reference key="1">
    <citation type="submission" date="2006-09" db="EMBL/GenBank/DDBJ databases">
        <title>Complete sequence of chromosome 1 of Shewanella sp. ANA-3.</title>
        <authorList>
            <person name="Copeland A."/>
            <person name="Lucas S."/>
            <person name="Lapidus A."/>
            <person name="Barry K."/>
            <person name="Detter J.C."/>
            <person name="Glavina del Rio T."/>
            <person name="Hammon N."/>
            <person name="Israni S."/>
            <person name="Dalin E."/>
            <person name="Tice H."/>
            <person name="Pitluck S."/>
            <person name="Chertkov O."/>
            <person name="Brettin T."/>
            <person name="Bruce D."/>
            <person name="Han C."/>
            <person name="Tapia R."/>
            <person name="Gilna P."/>
            <person name="Schmutz J."/>
            <person name="Larimer F."/>
            <person name="Land M."/>
            <person name="Hauser L."/>
            <person name="Kyrpides N."/>
            <person name="Kim E."/>
            <person name="Newman D."/>
            <person name="Salticov C."/>
            <person name="Konstantinidis K."/>
            <person name="Klappenback J."/>
            <person name="Tiedje J."/>
            <person name="Richardson P."/>
        </authorList>
    </citation>
    <scope>NUCLEOTIDE SEQUENCE [LARGE SCALE GENOMIC DNA]</scope>
    <source>
        <strain>ANA-3</strain>
    </source>
</reference>
<keyword id="KW-0028">Amino-acid biosynthesis</keyword>
<keyword id="KW-0963">Cytoplasm</keyword>
<keyword id="KW-0220">Diaminopimelate biosynthesis</keyword>
<keyword id="KW-0456">Lyase</keyword>
<keyword id="KW-0457">Lysine biosynthesis</keyword>
<keyword id="KW-0704">Schiff base</keyword>
<feature type="chain" id="PRO_1000050267" description="4-hydroxy-tetrahydrodipicolinate synthase">
    <location>
        <begin position="1"/>
        <end position="294"/>
    </location>
</feature>
<feature type="active site" description="Proton donor/acceptor" evidence="1">
    <location>
        <position position="133"/>
    </location>
</feature>
<feature type="active site" description="Schiff-base intermediate with substrate" evidence="1">
    <location>
        <position position="161"/>
    </location>
</feature>
<feature type="binding site" evidence="1">
    <location>
        <position position="45"/>
    </location>
    <ligand>
        <name>pyruvate</name>
        <dbReference type="ChEBI" id="CHEBI:15361"/>
    </ligand>
</feature>
<feature type="binding site" evidence="1">
    <location>
        <position position="203"/>
    </location>
    <ligand>
        <name>pyruvate</name>
        <dbReference type="ChEBI" id="CHEBI:15361"/>
    </ligand>
</feature>
<feature type="site" description="Part of a proton relay during catalysis" evidence="1">
    <location>
        <position position="44"/>
    </location>
</feature>
<feature type="site" description="Part of a proton relay during catalysis" evidence="1">
    <location>
        <position position="107"/>
    </location>
</feature>
<comment type="function">
    <text evidence="1">Catalyzes the condensation of (S)-aspartate-beta-semialdehyde [(S)-ASA] and pyruvate to 4-hydroxy-tetrahydrodipicolinate (HTPA).</text>
</comment>
<comment type="catalytic activity">
    <reaction evidence="1">
        <text>L-aspartate 4-semialdehyde + pyruvate = (2S,4S)-4-hydroxy-2,3,4,5-tetrahydrodipicolinate + H2O + H(+)</text>
        <dbReference type="Rhea" id="RHEA:34171"/>
        <dbReference type="ChEBI" id="CHEBI:15361"/>
        <dbReference type="ChEBI" id="CHEBI:15377"/>
        <dbReference type="ChEBI" id="CHEBI:15378"/>
        <dbReference type="ChEBI" id="CHEBI:67139"/>
        <dbReference type="ChEBI" id="CHEBI:537519"/>
        <dbReference type="EC" id="4.3.3.7"/>
    </reaction>
</comment>
<comment type="pathway">
    <text evidence="1">Amino-acid biosynthesis; L-lysine biosynthesis via DAP pathway; (S)-tetrahydrodipicolinate from L-aspartate: step 3/4.</text>
</comment>
<comment type="subunit">
    <text evidence="1">Homotetramer; dimer of dimers.</text>
</comment>
<comment type="subcellular location">
    <subcellularLocation>
        <location evidence="1">Cytoplasm</location>
    </subcellularLocation>
</comment>
<comment type="similarity">
    <text evidence="1">Belongs to the DapA family.</text>
</comment>
<comment type="caution">
    <text evidence="2">Was originally thought to be a dihydrodipicolinate synthase (DHDPS), catalyzing the condensation of (S)-aspartate-beta-semialdehyde [(S)-ASA] and pyruvate to dihydrodipicolinate (DHDP). However, it was shown in E.coli that the product of the enzymatic reaction is not dihydrodipicolinate but in fact (4S)-4-hydroxy-2,3,4,5-tetrahydro-(2S)-dipicolinic acid (HTPA), and that the consecutive dehydration reaction leading to DHDP is not spontaneous but catalyzed by DapB.</text>
</comment>
<accession>A0KVS0</accession>
<dbReference type="EC" id="4.3.3.7" evidence="1"/>
<dbReference type="EMBL" id="CP000469">
    <property type="protein sequence ID" value="ABK47889.1"/>
    <property type="molecule type" value="Genomic_DNA"/>
</dbReference>
<dbReference type="RefSeq" id="WP_011716687.1">
    <property type="nucleotide sequence ID" value="NC_008577.1"/>
</dbReference>
<dbReference type="SMR" id="A0KVS0"/>
<dbReference type="STRING" id="94122.Shewana3_1656"/>
<dbReference type="GeneID" id="94727647"/>
<dbReference type="KEGG" id="shn:Shewana3_1656"/>
<dbReference type="eggNOG" id="COG0329">
    <property type="taxonomic scope" value="Bacteria"/>
</dbReference>
<dbReference type="HOGENOM" id="CLU_049343_7_1_6"/>
<dbReference type="OrthoDB" id="9782828at2"/>
<dbReference type="UniPathway" id="UPA00034">
    <property type="reaction ID" value="UER00017"/>
</dbReference>
<dbReference type="Proteomes" id="UP000002589">
    <property type="component" value="Chromosome"/>
</dbReference>
<dbReference type="GO" id="GO:0005829">
    <property type="term" value="C:cytosol"/>
    <property type="evidence" value="ECO:0007669"/>
    <property type="project" value="TreeGrafter"/>
</dbReference>
<dbReference type="GO" id="GO:0008840">
    <property type="term" value="F:4-hydroxy-tetrahydrodipicolinate synthase activity"/>
    <property type="evidence" value="ECO:0007669"/>
    <property type="project" value="UniProtKB-UniRule"/>
</dbReference>
<dbReference type="GO" id="GO:0019877">
    <property type="term" value="P:diaminopimelate biosynthetic process"/>
    <property type="evidence" value="ECO:0007669"/>
    <property type="project" value="UniProtKB-UniRule"/>
</dbReference>
<dbReference type="GO" id="GO:0009089">
    <property type="term" value="P:lysine biosynthetic process via diaminopimelate"/>
    <property type="evidence" value="ECO:0007669"/>
    <property type="project" value="UniProtKB-UniRule"/>
</dbReference>
<dbReference type="CDD" id="cd00950">
    <property type="entry name" value="DHDPS"/>
    <property type="match status" value="1"/>
</dbReference>
<dbReference type="Gene3D" id="3.20.20.70">
    <property type="entry name" value="Aldolase class I"/>
    <property type="match status" value="1"/>
</dbReference>
<dbReference type="HAMAP" id="MF_00418">
    <property type="entry name" value="DapA"/>
    <property type="match status" value="1"/>
</dbReference>
<dbReference type="InterPro" id="IPR013785">
    <property type="entry name" value="Aldolase_TIM"/>
</dbReference>
<dbReference type="InterPro" id="IPR005263">
    <property type="entry name" value="DapA"/>
</dbReference>
<dbReference type="InterPro" id="IPR002220">
    <property type="entry name" value="DapA-like"/>
</dbReference>
<dbReference type="InterPro" id="IPR020625">
    <property type="entry name" value="Schiff_base-form_aldolases_AS"/>
</dbReference>
<dbReference type="InterPro" id="IPR020624">
    <property type="entry name" value="Schiff_base-form_aldolases_CS"/>
</dbReference>
<dbReference type="NCBIfam" id="TIGR00674">
    <property type="entry name" value="dapA"/>
    <property type="match status" value="1"/>
</dbReference>
<dbReference type="PANTHER" id="PTHR12128:SF66">
    <property type="entry name" value="4-HYDROXY-2-OXOGLUTARATE ALDOLASE, MITOCHONDRIAL"/>
    <property type="match status" value="1"/>
</dbReference>
<dbReference type="PANTHER" id="PTHR12128">
    <property type="entry name" value="DIHYDRODIPICOLINATE SYNTHASE"/>
    <property type="match status" value="1"/>
</dbReference>
<dbReference type="Pfam" id="PF00701">
    <property type="entry name" value="DHDPS"/>
    <property type="match status" value="1"/>
</dbReference>
<dbReference type="PIRSF" id="PIRSF001365">
    <property type="entry name" value="DHDPS"/>
    <property type="match status" value="1"/>
</dbReference>
<dbReference type="PRINTS" id="PR00146">
    <property type="entry name" value="DHPICSNTHASE"/>
</dbReference>
<dbReference type="SMART" id="SM01130">
    <property type="entry name" value="DHDPS"/>
    <property type="match status" value="1"/>
</dbReference>
<dbReference type="SUPFAM" id="SSF51569">
    <property type="entry name" value="Aldolase"/>
    <property type="match status" value="1"/>
</dbReference>
<dbReference type="PROSITE" id="PS00665">
    <property type="entry name" value="DHDPS_1"/>
    <property type="match status" value="1"/>
</dbReference>
<dbReference type="PROSITE" id="PS00666">
    <property type="entry name" value="DHDPS_2"/>
    <property type="match status" value="1"/>
</dbReference>
<protein>
    <recommendedName>
        <fullName evidence="1">4-hydroxy-tetrahydrodipicolinate synthase</fullName>
        <shortName evidence="1">HTPA synthase</shortName>
        <ecNumber evidence="1">4.3.3.7</ecNumber>
    </recommendedName>
</protein>
<name>DAPA_SHESA</name>
<organism>
    <name type="scientific">Shewanella sp. (strain ANA-3)</name>
    <dbReference type="NCBI Taxonomy" id="94122"/>
    <lineage>
        <taxon>Bacteria</taxon>
        <taxon>Pseudomonadati</taxon>
        <taxon>Pseudomonadota</taxon>
        <taxon>Gammaproteobacteria</taxon>
        <taxon>Alteromonadales</taxon>
        <taxon>Shewanellaceae</taxon>
        <taxon>Shewanella</taxon>
    </lineage>
</organism>
<evidence type="ECO:0000255" key="1">
    <source>
        <dbReference type="HAMAP-Rule" id="MF_00418"/>
    </source>
</evidence>
<evidence type="ECO:0000305" key="2"/>
<proteinExistence type="inferred from homology"/>
<gene>
    <name evidence="1" type="primary">dapA</name>
    <name type="ordered locus">Shewana3_1656</name>
</gene>
<sequence>MINGSIVALITPMNSDGSVDFASLERLVEFHIDQGTDAIVAVGTTGESATLPMNEHVTVVAQTVKFAAGRIPVIGGNGANATSEAIELTKSLSKVGVAAMLGVTPYYNKPTPKGLVAHYKAVAASTDIPQILYNVPGRTAVDMKPETVAELVAVSNIIGVKEATGDVSRVQRLRELCGNDFMLYSGDDATAREFLLLGGNGVISVANNIVPKAFKAMCDAALAGNAELAASIDEPLRGLYSTLFCEANPIPVKWAAHRMGLIECGHIRLPLTELSEQCHGLLLDAMTRAQIEVK</sequence>